<keyword id="KW-0256">Endoplasmic reticulum</keyword>
<keyword id="KW-0349">Heme</keyword>
<keyword id="KW-0408">Iron</keyword>
<keyword id="KW-0472">Membrane</keyword>
<keyword id="KW-0479">Metal-binding</keyword>
<keyword id="KW-0503">Monooxygenase</keyword>
<keyword id="KW-0560">Oxidoreductase</keyword>
<keyword id="KW-0812">Transmembrane</keyword>
<keyword id="KW-1133">Transmembrane helix</keyword>
<accession>P98188</accession>
<dbReference type="EC" id="1.14.-.-"/>
<dbReference type="EMBL" id="AF092917">
    <property type="protein sequence ID" value="AAG33645.1"/>
    <property type="molecule type" value="mRNA"/>
</dbReference>
<dbReference type="SMR" id="P98188"/>
<dbReference type="KEGG" id="ag:AAG33645"/>
<dbReference type="GO" id="GO:0005789">
    <property type="term" value="C:endoplasmic reticulum membrane"/>
    <property type="evidence" value="ECO:0007669"/>
    <property type="project" value="UniProtKB-SubCell"/>
</dbReference>
<dbReference type="GO" id="GO:0020037">
    <property type="term" value="F:heme binding"/>
    <property type="evidence" value="ECO:0007669"/>
    <property type="project" value="InterPro"/>
</dbReference>
<dbReference type="GO" id="GO:0005506">
    <property type="term" value="F:iron ion binding"/>
    <property type="evidence" value="ECO:0007669"/>
    <property type="project" value="InterPro"/>
</dbReference>
<dbReference type="GO" id="GO:0004497">
    <property type="term" value="F:monooxygenase activity"/>
    <property type="evidence" value="ECO:0007669"/>
    <property type="project" value="UniProtKB-KW"/>
</dbReference>
<dbReference type="GO" id="GO:0016705">
    <property type="term" value="F:oxidoreductase activity, acting on paired donors, with incorporation or reduction of molecular oxygen"/>
    <property type="evidence" value="ECO:0007669"/>
    <property type="project" value="InterPro"/>
</dbReference>
<dbReference type="CDD" id="cd11064">
    <property type="entry name" value="CYP86A"/>
    <property type="match status" value="1"/>
</dbReference>
<dbReference type="Gene3D" id="1.10.630.10">
    <property type="entry name" value="Cytochrome P450"/>
    <property type="match status" value="1"/>
</dbReference>
<dbReference type="InterPro" id="IPR001128">
    <property type="entry name" value="Cyt_P450"/>
</dbReference>
<dbReference type="InterPro" id="IPR002401">
    <property type="entry name" value="Cyt_P450_E_grp-I"/>
</dbReference>
<dbReference type="InterPro" id="IPR036396">
    <property type="entry name" value="Cyt_P450_sf"/>
</dbReference>
<dbReference type="PANTHER" id="PTHR24296">
    <property type="entry name" value="CYTOCHROME P450"/>
    <property type="match status" value="1"/>
</dbReference>
<dbReference type="Pfam" id="PF00067">
    <property type="entry name" value="p450"/>
    <property type="match status" value="1"/>
</dbReference>
<dbReference type="PRINTS" id="PR00463">
    <property type="entry name" value="EP450I"/>
</dbReference>
<dbReference type="PRINTS" id="PR00385">
    <property type="entry name" value="P450"/>
</dbReference>
<dbReference type="SUPFAM" id="SSF48264">
    <property type="entry name" value="Cytochrome P450"/>
    <property type="match status" value="1"/>
</dbReference>
<evidence type="ECO:0000250" key="1"/>
<evidence type="ECO:0000255" key="2"/>
<evidence type="ECO:0000305" key="3"/>
<proteinExistence type="evidence at transcript level"/>
<gene>
    <name type="primary">CYP94A2</name>
    <name type="synonym">VAGH811</name>
</gene>
<reference key="1">
    <citation type="journal article" date="1999" name="Biochem. Biophys. Res. Commun.">
        <title>Cloning and functional characterization of CYP94A2, a medium chain fatty acid hydroxylase from Vicia sativa.</title>
        <authorList>
            <person name="Le Bouquin R."/>
            <person name="Pinot F."/>
            <person name="Benveniste I."/>
            <person name="Salauen J.-P."/>
            <person name="Durst F."/>
        </authorList>
    </citation>
    <scope>NUCLEOTIDE SEQUENCE [MRNA]</scope>
    <source>
        <tissue>Seedling</tissue>
    </source>
</reference>
<name>C94A2_VICSA</name>
<feature type="chain" id="PRO_0000052193" description="Cytochrome P450 94A2">
    <location>
        <begin position="1"/>
        <end position="513"/>
    </location>
</feature>
<feature type="transmembrane region" description="Helical" evidence="2">
    <location>
        <begin position="7"/>
        <end position="24"/>
    </location>
</feature>
<feature type="binding site" description="axial binding residue" evidence="1">
    <location>
        <position position="455"/>
    </location>
    <ligand>
        <name>heme</name>
        <dbReference type="ChEBI" id="CHEBI:30413"/>
    </ligand>
    <ligandPart>
        <name>Fe</name>
        <dbReference type="ChEBI" id="CHEBI:18248"/>
    </ligandPart>
</feature>
<protein>
    <recommendedName>
        <fullName>Cytochrome P450 94A2</fullName>
        <ecNumber>1.14.-.-</ecNumber>
    </recommendedName>
    <alternativeName>
        <fullName>P450-dependent fatty acid omega-hydroxylase</fullName>
    </alternativeName>
</protein>
<sequence length="513" mass="58419">MELETLISWLLFSTSLFWFLFLATKTKSKPPKTPSSTTNTPIPKSYPIFGSAFSLLANFHRRIQWTSDILQTIPSSTFVLHRPFGARQVFTAQPAVVQHILRTNFTCYGKGLTFYQSINDFLGDGIFNADGESWKFQRQISSHEFNTRSLRKFVETVVDVELSDRLVPVLSQASNSQTTLDFQDILQRLTFDNICMIAFGYDPEYLLPSLPEIPFAKAFDESSQLSIERLNALIPLLWKVKRFLNIGVERQLKEAVAEVRGLATKIVKNKKKELKEKALQSESESVDLLSRFLSSGHSDESFVTDMVISIILAGRDTTSAALTWFFWLLSKHSHVENEILKEITGKSETVGYDEVKDMVYTHAALCESMRLYPPLPVDTKVAVHDDVLPDGTLVKKGWRVTYHIYAMGRSEKIWGPDWAEFRPERWLSRDEVGKWSFVGIDYYSYPVFQAGPRVCIGKEMAFLQMKRVVAGIMGRFRVVPAMVEGIEPEYTAHFTSVMKGGFPVKIEKRSPLV</sequence>
<comment type="function">
    <text>Catalyzes the omega-hydroxylation of various fatty acids (FA). The substrate specificity is higher for myristate &gt; laurate = palmitate (C14&gt;C16=C12).</text>
</comment>
<comment type="cofactor">
    <cofactor evidence="1">
        <name>heme</name>
        <dbReference type="ChEBI" id="CHEBI:30413"/>
    </cofactor>
</comment>
<comment type="subcellular location">
    <subcellularLocation>
        <location evidence="1">Endoplasmic reticulum membrane</location>
        <topology evidence="1">Single-pass membrane protein</topology>
    </subcellularLocation>
</comment>
<comment type="tissue specificity">
    <text>Weakly expressed in seedlings.</text>
</comment>
<comment type="induction">
    <text>By clofibrate; weakly.</text>
</comment>
<comment type="similarity">
    <text evidence="3">Belongs to the cytochrome P450 family.</text>
</comment>
<organism>
    <name type="scientific">Vicia sativa</name>
    <name type="common">Spring vetch</name>
    <name type="synonym">Tare</name>
    <dbReference type="NCBI Taxonomy" id="3908"/>
    <lineage>
        <taxon>Eukaryota</taxon>
        <taxon>Viridiplantae</taxon>
        <taxon>Streptophyta</taxon>
        <taxon>Embryophyta</taxon>
        <taxon>Tracheophyta</taxon>
        <taxon>Spermatophyta</taxon>
        <taxon>Magnoliopsida</taxon>
        <taxon>eudicotyledons</taxon>
        <taxon>Gunneridae</taxon>
        <taxon>Pentapetalae</taxon>
        <taxon>rosids</taxon>
        <taxon>fabids</taxon>
        <taxon>Fabales</taxon>
        <taxon>Fabaceae</taxon>
        <taxon>Papilionoideae</taxon>
        <taxon>50 kb inversion clade</taxon>
        <taxon>NPAAA clade</taxon>
        <taxon>Hologalegina</taxon>
        <taxon>IRL clade</taxon>
        <taxon>Fabeae</taxon>
        <taxon>Vicia</taxon>
    </lineage>
</organism>